<sequence>MEWRDEGALLSVRRHGESSAIIEVFTAAHGRHAGVVRGGASRKIAPILQPGAQLDLTWKARLDEHMGAFTVEPLRSRTALLGDRLGLAGLNAICAMLHVTLPEREPHSTLWQESMVLLDALDRPGWPPAYLRWEMRLLEETGFGLDLTRCAVTGSREDLAFVSPKTGRAVSSGAAGGWADRLFPLPLALLGQGPASAEEVRQGLAITGHFLGRELAPLLNGRPLPEARARLMELLARA</sequence>
<organism>
    <name type="scientific">Cereibacter sphaeroides (strain ATCC 17023 / DSM 158 / JCM 6121 / CCUG 31486 / LMG 2827 / NBRC 12203 / NCIMB 8253 / ATH 2.4.1.)</name>
    <name type="common">Rhodobacter sphaeroides</name>
    <dbReference type="NCBI Taxonomy" id="272943"/>
    <lineage>
        <taxon>Bacteria</taxon>
        <taxon>Pseudomonadati</taxon>
        <taxon>Pseudomonadota</taxon>
        <taxon>Alphaproteobacteria</taxon>
        <taxon>Rhodobacterales</taxon>
        <taxon>Paracoccaceae</taxon>
        <taxon>Cereibacter</taxon>
    </lineage>
</organism>
<accession>Q3J5V8</accession>
<gene>
    <name evidence="1" type="primary">recO</name>
    <name type="ordered locus">RHOS4_02580</name>
    <name type="ORF">RSP_1678</name>
</gene>
<protein>
    <recommendedName>
        <fullName evidence="1">DNA repair protein RecO</fullName>
    </recommendedName>
    <alternativeName>
        <fullName evidence="1">Recombination protein O</fullName>
    </alternativeName>
</protein>
<reference key="1">
    <citation type="submission" date="2005-09" db="EMBL/GenBank/DDBJ databases">
        <title>Complete sequence of chromosome 1 of Rhodobacter sphaeroides 2.4.1.</title>
        <authorList>
            <person name="Copeland A."/>
            <person name="Lucas S."/>
            <person name="Lapidus A."/>
            <person name="Barry K."/>
            <person name="Detter J.C."/>
            <person name="Glavina T."/>
            <person name="Hammon N."/>
            <person name="Israni S."/>
            <person name="Pitluck S."/>
            <person name="Richardson P."/>
            <person name="Mackenzie C."/>
            <person name="Choudhary M."/>
            <person name="Larimer F."/>
            <person name="Hauser L.J."/>
            <person name="Land M."/>
            <person name="Donohue T.J."/>
            <person name="Kaplan S."/>
        </authorList>
    </citation>
    <scope>NUCLEOTIDE SEQUENCE [LARGE SCALE GENOMIC DNA]</scope>
    <source>
        <strain>ATCC 17023 / DSM 158 / JCM 6121 / CCUG 31486 / LMG 2827 / NBRC 12203 / NCIMB 8253 / ATH 2.4.1.</strain>
    </source>
</reference>
<keyword id="KW-0227">DNA damage</keyword>
<keyword id="KW-0233">DNA recombination</keyword>
<keyword id="KW-0234">DNA repair</keyword>
<keyword id="KW-1185">Reference proteome</keyword>
<proteinExistence type="inferred from homology"/>
<dbReference type="EMBL" id="CP000143">
    <property type="protein sequence ID" value="ABA77826.1"/>
    <property type="status" value="ALT_INIT"/>
    <property type="molecule type" value="Genomic_DNA"/>
</dbReference>
<dbReference type="RefSeq" id="WP_011336937.1">
    <property type="nucleotide sequence ID" value="NZ_CP030271.1"/>
</dbReference>
<dbReference type="RefSeq" id="YP_351727.1">
    <property type="nucleotide sequence ID" value="NC_007493.2"/>
</dbReference>
<dbReference type="SMR" id="Q3J5V8"/>
<dbReference type="STRING" id="272943.RSP_1678"/>
<dbReference type="EnsemblBacteria" id="ABA77826">
    <property type="protein sequence ID" value="ABA77826"/>
    <property type="gene ID" value="RSP_1678"/>
</dbReference>
<dbReference type="GeneID" id="3717983"/>
<dbReference type="KEGG" id="rsp:RSP_1678"/>
<dbReference type="PATRIC" id="fig|272943.9.peg.555"/>
<dbReference type="eggNOG" id="COG1381">
    <property type="taxonomic scope" value="Bacteria"/>
</dbReference>
<dbReference type="OrthoDB" id="9804792at2"/>
<dbReference type="Proteomes" id="UP000002703">
    <property type="component" value="Chromosome 1"/>
</dbReference>
<dbReference type="GO" id="GO:0043590">
    <property type="term" value="C:bacterial nucleoid"/>
    <property type="evidence" value="ECO:0007669"/>
    <property type="project" value="TreeGrafter"/>
</dbReference>
<dbReference type="GO" id="GO:0006310">
    <property type="term" value="P:DNA recombination"/>
    <property type="evidence" value="ECO:0007669"/>
    <property type="project" value="UniProtKB-UniRule"/>
</dbReference>
<dbReference type="GO" id="GO:0006302">
    <property type="term" value="P:double-strand break repair"/>
    <property type="evidence" value="ECO:0007669"/>
    <property type="project" value="TreeGrafter"/>
</dbReference>
<dbReference type="Gene3D" id="2.40.50.140">
    <property type="entry name" value="Nucleic acid-binding proteins"/>
    <property type="match status" value="1"/>
</dbReference>
<dbReference type="Gene3D" id="1.20.1440.120">
    <property type="entry name" value="Recombination protein O, C-terminal domain"/>
    <property type="match status" value="1"/>
</dbReference>
<dbReference type="HAMAP" id="MF_00201">
    <property type="entry name" value="RecO"/>
    <property type="match status" value="1"/>
</dbReference>
<dbReference type="InterPro" id="IPR037278">
    <property type="entry name" value="ARFGAP/RecO"/>
</dbReference>
<dbReference type="InterPro" id="IPR022572">
    <property type="entry name" value="DNA_rep/recomb_RecO_N"/>
</dbReference>
<dbReference type="InterPro" id="IPR012340">
    <property type="entry name" value="NA-bd_OB-fold"/>
</dbReference>
<dbReference type="InterPro" id="IPR003717">
    <property type="entry name" value="RecO"/>
</dbReference>
<dbReference type="InterPro" id="IPR042242">
    <property type="entry name" value="RecO_C"/>
</dbReference>
<dbReference type="NCBIfam" id="TIGR00613">
    <property type="entry name" value="reco"/>
    <property type="match status" value="1"/>
</dbReference>
<dbReference type="PANTHER" id="PTHR33991">
    <property type="entry name" value="DNA REPAIR PROTEIN RECO"/>
    <property type="match status" value="1"/>
</dbReference>
<dbReference type="PANTHER" id="PTHR33991:SF1">
    <property type="entry name" value="DNA REPAIR PROTEIN RECO"/>
    <property type="match status" value="1"/>
</dbReference>
<dbReference type="Pfam" id="PF02565">
    <property type="entry name" value="RecO_C"/>
    <property type="match status" value="1"/>
</dbReference>
<dbReference type="Pfam" id="PF11967">
    <property type="entry name" value="RecO_N"/>
    <property type="match status" value="1"/>
</dbReference>
<dbReference type="SUPFAM" id="SSF57863">
    <property type="entry name" value="ArfGap/RecO-like zinc finger"/>
    <property type="match status" value="1"/>
</dbReference>
<dbReference type="SUPFAM" id="SSF50249">
    <property type="entry name" value="Nucleic acid-binding proteins"/>
    <property type="match status" value="1"/>
</dbReference>
<evidence type="ECO:0000255" key="1">
    <source>
        <dbReference type="HAMAP-Rule" id="MF_00201"/>
    </source>
</evidence>
<evidence type="ECO:0000305" key="2"/>
<feature type="chain" id="PRO_0000227051" description="DNA repair protein RecO">
    <location>
        <begin position="1"/>
        <end position="238"/>
    </location>
</feature>
<comment type="function">
    <text evidence="1">Involved in DNA repair and RecF pathway recombination.</text>
</comment>
<comment type="similarity">
    <text evidence="1">Belongs to the RecO family.</text>
</comment>
<comment type="sequence caution" evidence="2">
    <conflict type="erroneous initiation">
        <sequence resource="EMBL-CDS" id="ABA77826"/>
    </conflict>
</comment>
<name>RECO_CERS4</name>